<keyword id="KW-0560">Oxidoreductase</keyword>
<keyword id="KW-0819">tRNA processing</keyword>
<sequence length="305" mass="33798">MQGNFSKKIDPMSNLPFTVAALYCFAPLPQYESLREPLAQLCCANGIKGTLLLAAEGINGTVAGSAGAIEKLIAHITAIPGLGEPELKYSHASEMPFHRMKVRLKREIVTMGVEGIDPLKSVGTYIAPKDWNALIADENTVVVDKRNDYEYAIGTFEGAIDPQTRTFREFPEWVKQNRDRLEGKKIAMFCTGGIRCEKATAFVKGLGFDDVYHLKGGILKYLEEVPREQSMWNGECFVFDERVAVGHGLAESDVELCRACRRPLTPQDKLSQFFEEGVSCAGCYAERQKQVKLAEKRGANKHIGS</sequence>
<proteinExistence type="inferred from homology"/>
<evidence type="ECO:0000255" key="1">
    <source>
        <dbReference type="HAMAP-Rule" id="MF_00469"/>
    </source>
</evidence>
<gene>
    <name evidence="1" type="primary">trhO</name>
    <name type="ordered locus">BMEII0007</name>
</gene>
<protein>
    <recommendedName>
        <fullName evidence="1">tRNA uridine(34) hydroxylase</fullName>
        <ecNumber evidence="1">1.14.-.-</ecNumber>
    </recommendedName>
    <alternativeName>
        <fullName evidence="1">tRNA hydroxylation protein O</fullName>
    </alternativeName>
</protein>
<dbReference type="EC" id="1.14.-.-" evidence="1"/>
<dbReference type="EMBL" id="AE008918">
    <property type="protein sequence ID" value="AAL53248.1"/>
    <property type="molecule type" value="Genomic_DNA"/>
</dbReference>
<dbReference type="PIR" id="AE3510">
    <property type="entry name" value="AE3510"/>
</dbReference>
<dbReference type="SMR" id="Q8YE11"/>
<dbReference type="KEGG" id="bme:BMEII0007"/>
<dbReference type="eggNOG" id="COG1054">
    <property type="taxonomic scope" value="Bacteria"/>
</dbReference>
<dbReference type="Proteomes" id="UP000000419">
    <property type="component" value="Chromosome II"/>
</dbReference>
<dbReference type="GO" id="GO:0016705">
    <property type="term" value="F:oxidoreductase activity, acting on paired donors, with incorporation or reduction of molecular oxygen"/>
    <property type="evidence" value="ECO:0007669"/>
    <property type="project" value="UniProtKB-UniRule"/>
</dbReference>
<dbReference type="GO" id="GO:0006400">
    <property type="term" value="P:tRNA modification"/>
    <property type="evidence" value="ECO:0007669"/>
    <property type="project" value="UniProtKB-UniRule"/>
</dbReference>
<dbReference type="CDD" id="cd01518">
    <property type="entry name" value="RHOD_YceA"/>
    <property type="match status" value="1"/>
</dbReference>
<dbReference type="Gene3D" id="3.30.70.100">
    <property type="match status" value="1"/>
</dbReference>
<dbReference type="Gene3D" id="3.40.250.10">
    <property type="entry name" value="Rhodanese-like domain"/>
    <property type="match status" value="1"/>
</dbReference>
<dbReference type="HAMAP" id="MF_00469">
    <property type="entry name" value="TrhO"/>
    <property type="match status" value="1"/>
</dbReference>
<dbReference type="InterPro" id="IPR001763">
    <property type="entry name" value="Rhodanese-like_dom"/>
</dbReference>
<dbReference type="InterPro" id="IPR036873">
    <property type="entry name" value="Rhodanese-like_dom_sf"/>
</dbReference>
<dbReference type="InterPro" id="IPR020936">
    <property type="entry name" value="TrhO"/>
</dbReference>
<dbReference type="InterPro" id="IPR040503">
    <property type="entry name" value="TRHO_N"/>
</dbReference>
<dbReference type="NCBIfam" id="NF001136">
    <property type="entry name" value="PRK00142.1-4"/>
    <property type="match status" value="1"/>
</dbReference>
<dbReference type="PANTHER" id="PTHR43268:SF3">
    <property type="entry name" value="RHODANESE-LIKE DOMAIN-CONTAINING PROTEIN 7-RELATED"/>
    <property type="match status" value="1"/>
</dbReference>
<dbReference type="PANTHER" id="PTHR43268">
    <property type="entry name" value="THIOSULFATE SULFURTRANSFERASE/RHODANESE-LIKE DOMAIN-CONTAINING PROTEIN 2"/>
    <property type="match status" value="1"/>
</dbReference>
<dbReference type="Pfam" id="PF00581">
    <property type="entry name" value="Rhodanese"/>
    <property type="match status" value="1"/>
</dbReference>
<dbReference type="Pfam" id="PF17773">
    <property type="entry name" value="UPF0176_N"/>
    <property type="match status" value="1"/>
</dbReference>
<dbReference type="SMART" id="SM00450">
    <property type="entry name" value="RHOD"/>
    <property type="match status" value="1"/>
</dbReference>
<dbReference type="SUPFAM" id="SSF52821">
    <property type="entry name" value="Rhodanese/Cell cycle control phosphatase"/>
    <property type="match status" value="1"/>
</dbReference>
<dbReference type="PROSITE" id="PS50206">
    <property type="entry name" value="RHODANESE_3"/>
    <property type="match status" value="1"/>
</dbReference>
<accession>Q8YE11</accession>
<comment type="function">
    <text evidence="1">Catalyzes oxygen-dependent 5-hydroxyuridine (ho5U) modification at position 34 in tRNAs.</text>
</comment>
<comment type="catalytic activity">
    <reaction evidence="1">
        <text>uridine(34) in tRNA + AH2 + O2 = 5-hydroxyuridine(34) in tRNA + A + H2O</text>
        <dbReference type="Rhea" id="RHEA:64224"/>
        <dbReference type="Rhea" id="RHEA-COMP:11727"/>
        <dbReference type="Rhea" id="RHEA-COMP:13381"/>
        <dbReference type="ChEBI" id="CHEBI:13193"/>
        <dbReference type="ChEBI" id="CHEBI:15377"/>
        <dbReference type="ChEBI" id="CHEBI:15379"/>
        <dbReference type="ChEBI" id="CHEBI:17499"/>
        <dbReference type="ChEBI" id="CHEBI:65315"/>
        <dbReference type="ChEBI" id="CHEBI:136877"/>
    </reaction>
</comment>
<comment type="similarity">
    <text evidence="1">Belongs to the TrhO family.</text>
</comment>
<feature type="chain" id="PRO_0000161453" description="tRNA uridine(34) hydroxylase">
    <location>
        <begin position="1"/>
        <end position="305"/>
    </location>
</feature>
<feature type="domain" description="Rhodanese" evidence="1">
    <location>
        <begin position="136"/>
        <end position="230"/>
    </location>
</feature>
<feature type="active site" description="Cysteine persulfide intermediate" evidence="1">
    <location>
        <position position="190"/>
    </location>
</feature>
<reference key="1">
    <citation type="journal article" date="2002" name="Proc. Natl. Acad. Sci. U.S.A.">
        <title>The genome sequence of the facultative intracellular pathogen Brucella melitensis.</title>
        <authorList>
            <person name="DelVecchio V.G."/>
            <person name="Kapatral V."/>
            <person name="Redkar R.J."/>
            <person name="Patra G."/>
            <person name="Mujer C."/>
            <person name="Los T."/>
            <person name="Ivanova N."/>
            <person name="Anderson I."/>
            <person name="Bhattacharyya A."/>
            <person name="Lykidis A."/>
            <person name="Reznik G."/>
            <person name="Jablonski L."/>
            <person name="Larsen N."/>
            <person name="D'Souza M."/>
            <person name="Bernal A."/>
            <person name="Mazur M."/>
            <person name="Goltsman E."/>
            <person name="Selkov E."/>
            <person name="Elzer P.H."/>
            <person name="Hagius S."/>
            <person name="O'Callaghan D."/>
            <person name="Letesson J.-J."/>
            <person name="Haselkorn R."/>
            <person name="Kyrpides N.C."/>
            <person name="Overbeek R."/>
        </authorList>
    </citation>
    <scope>NUCLEOTIDE SEQUENCE [LARGE SCALE GENOMIC DNA]</scope>
    <source>
        <strain>ATCC 23456 / CCUG 17765 / NCTC 10094 / 16M</strain>
    </source>
</reference>
<organism>
    <name type="scientific">Brucella melitensis biotype 1 (strain ATCC 23456 / CCUG 17765 / NCTC 10094 / 16M)</name>
    <dbReference type="NCBI Taxonomy" id="224914"/>
    <lineage>
        <taxon>Bacteria</taxon>
        <taxon>Pseudomonadati</taxon>
        <taxon>Pseudomonadota</taxon>
        <taxon>Alphaproteobacteria</taxon>
        <taxon>Hyphomicrobiales</taxon>
        <taxon>Brucellaceae</taxon>
        <taxon>Brucella/Ochrobactrum group</taxon>
        <taxon>Brucella</taxon>
    </lineage>
</organism>
<name>TRHO_BRUME</name>